<name>RS12_NOVAD</name>
<keyword id="KW-0488">Methylation</keyword>
<keyword id="KW-1185">Reference proteome</keyword>
<keyword id="KW-0687">Ribonucleoprotein</keyword>
<keyword id="KW-0689">Ribosomal protein</keyword>
<keyword id="KW-0694">RNA-binding</keyword>
<keyword id="KW-0699">rRNA-binding</keyword>
<keyword id="KW-0820">tRNA-binding</keyword>
<feature type="chain" id="PRO_0000238138" description="Small ribosomal subunit protein uS12">
    <location>
        <begin position="1"/>
        <end position="123"/>
    </location>
</feature>
<feature type="region of interest" description="Disordered" evidence="3">
    <location>
        <begin position="1"/>
        <end position="29"/>
    </location>
</feature>
<feature type="modified residue" description="3-methylthioaspartic acid" evidence="1">
    <location>
        <position position="89"/>
    </location>
</feature>
<accession>Q2G8Y5</accession>
<gene>
    <name evidence="2" type="primary">rpsL</name>
    <name type="ordered locus">Saro_1244</name>
</gene>
<comment type="function">
    <text evidence="2">With S4 and S5 plays an important role in translational accuracy.</text>
</comment>
<comment type="function">
    <text evidence="2">Interacts with and stabilizes bases of the 16S rRNA that are involved in tRNA selection in the A site and with the mRNA backbone. Located at the interface of the 30S and 50S subunits, it traverses the body of the 30S subunit contacting proteins on the other side and probably holding the rRNA structure together. The combined cluster of proteins S8, S12 and S17 appears to hold together the shoulder and platform of the 30S subunit.</text>
</comment>
<comment type="subunit">
    <text evidence="2">Part of the 30S ribosomal subunit. Contacts proteins S8 and S17. May interact with IF1 in the 30S initiation complex.</text>
</comment>
<comment type="similarity">
    <text evidence="2">Belongs to the universal ribosomal protein uS12 family.</text>
</comment>
<dbReference type="EMBL" id="CP000248">
    <property type="protein sequence ID" value="ABD25688.1"/>
    <property type="molecule type" value="Genomic_DNA"/>
</dbReference>
<dbReference type="RefSeq" id="WP_011444902.1">
    <property type="nucleotide sequence ID" value="NC_007794.1"/>
</dbReference>
<dbReference type="SMR" id="Q2G8Y5"/>
<dbReference type="STRING" id="279238.Saro_1244"/>
<dbReference type="KEGG" id="nar:Saro_1244"/>
<dbReference type="eggNOG" id="COG0048">
    <property type="taxonomic scope" value="Bacteria"/>
</dbReference>
<dbReference type="HOGENOM" id="CLU_104295_1_2_5"/>
<dbReference type="Proteomes" id="UP000009134">
    <property type="component" value="Chromosome"/>
</dbReference>
<dbReference type="GO" id="GO:0015935">
    <property type="term" value="C:small ribosomal subunit"/>
    <property type="evidence" value="ECO:0007669"/>
    <property type="project" value="InterPro"/>
</dbReference>
<dbReference type="GO" id="GO:0019843">
    <property type="term" value="F:rRNA binding"/>
    <property type="evidence" value="ECO:0007669"/>
    <property type="project" value="UniProtKB-UniRule"/>
</dbReference>
<dbReference type="GO" id="GO:0003735">
    <property type="term" value="F:structural constituent of ribosome"/>
    <property type="evidence" value="ECO:0007669"/>
    <property type="project" value="InterPro"/>
</dbReference>
<dbReference type="GO" id="GO:0000049">
    <property type="term" value="F:tRNA binding"/>
    <property type="evidence" value="ECO:0007669"/>
    <property type="project" value="UniProtKB-UniRule"/>
</dbReference>
<dbReference type="GO" id="GO:0006412">
    <property type="term" value="P:translation"/>
    <property type="evidence" value="ECO:0007669"/>
    <property type="project" value="UniProtKB-UniRule"/>
</dbReference>
<dbReference type="CDD" id="cd03368">
    <property type="entry name" value="Ribosomal_S12"/>
    <property type="match status" value="1"/>
</dbReference>
<dbReference type="FunFam" id="2.40.50.140:FF:000001">
    <property type="entry name" value="30S ribosomal protein S12"/>
    <property type="match status" value="1"/>
</dbReference>
<dbReference type="Gene3D" id="2.40.50.140">
    <property type="entry name" value="Nucleic acid-binding proteins"/>
    <property type="match status" value="1"/>
</dbReference>
<dbReference type="HAMAP" id="MF_00403_B">
    <property type="entry name" value="Ribosomal_uS12_B"/>
    <property type="match status" value="1"/>
</dbReference>
<dbReference type="InterPro" id="IPR012340">
    <property type="entry name" value="NA-bd_OB-fold"/>
</dbReference>
<dbReference type="InterPro" id="IPR006032">
    <property type="entry name" value="Ribosomal_uS12"/>
</dbReference>
<dbReference type="InterPro" id="IPR005679">
    <property type="entry name" value="Ribosomal_uS12_bac"/>
</dbReference>
<dbReference type="NCBIfam" id="TIGR00981">
    <property type="entry name" value="rpsL_bact"/>
    <property type="match status" value="1"/>
</dbReference>
<dbReference type="PANTHER" id="PTHR11652">
    <property type="entry name" value="30S RIBOSOMAL PROTEIN S12 FAMILY MEMBER"/>
    <property type="match status" value="1"/>
</dbReference>
<dbReference type="Pfam" id="PF00164">
    <property type="entry name" value="Ribosom_S12_S23"/>
    <property type="match status" value="1"/>
</dbReference>
<dbReference type="PIRSF" id="PIRSF002133">
    <property type="entry name" value="Ribosomal_S12/S23"/>
    <property type="match status" value="1"/>
</dbReference>
<dbReference type="PRINTS" id="PR01034">
    <property type="entry name" value="RIBOSOMALS12"/>
</dbReference>
<dbReference type="SUPFAM" id="SSF50249">
    <property type="entry name" value="Nucleic acid-binding proteins"/>
    <property type="match status" value="1"/>
</dbReference>
<dbReference type="PROSITE" id="PS00055">
    <property type="entry name" value="RIBOSOMAL_S12"/>
    <property type="match status" value="1"/>
</dbReference>
<sequence length="123" mass="13920">MPTINQLVRKGREPQKAKSKVPAMEQNPQKRGVCTRVYTTTPKKPNSALRKVAKIRLTNSREVISYIPGEGHNLQEHSVVLIRGGRVRDLPGVRYHVLRGVLDTQGVKDRKQSRSKYGAKRPK</sequence>
<evidence type="ECO:0000250" key="1"/>
<evidence type="ECO:0000255" key="2">
    <source>
        <dbReference type="HAMAP-Rule" id="MF_00403"/>
    </source>
</evidence>
<evidence type="ECO:0000256" key="3">
    <source>
        <dbReference type="SAM" id="MobiDB-lite"/>
    </source>
</evidence>
<evidence type="ECO:0000305" key="4"/>
<protein>
    <recommendedName>
        <fullName evidence="2">Small ribosomal subunit protein uS12</fullName>
    </recommendedName>
    <alternativeName>
        <fullName evidence="4">30S ribosomal protein S12</fullName>
    </alternativeName>
</protein>
<organism>
    <name type="scientific">Novosphingobium aromaticivorans (strain ATCC 700278 / DSM 12444 / CCUG 56034 / CIP 105152 / NBRC 16084 / F199)</name>
    <dbReference type="NCBI Taxonomy" id="279238"/>
    <lineage>
        <taxon>Bacteria</taxon>
        <taxon>Pseudomonadati</taxon>
        <taxon>Pseudomonadota</taxon>
        <taxon>Alphaproteobacteria</taxon>
        <taxon>Sphingomonadales</taxon>
        <taxon>Sphingomonadaceae</taxon>
        <taxon>Novosphingobium</taxon>
    </lineage>
</organism>
<reference key="1">
    <citation type="submission" date="2006-01" db="EMBL/GenBank/DDBJ databases">
        <title>Complete sequence of Novosphingobium aromaticivorans DSM 12444.</title>
        <authorList>
            <consortium name="US DOE Joint Genome Institute"/>
            <person name="Copeland A."/>
            <person name="Lucas S."/>
            <person name="Lapidus A."/>
            <person name="Barry K."/>
            <person name="Detter J.C."/>
            <person name="Glavina T."/>
            <person name="Hammon N."/>
            <person name="Israni S."/>
            <person name="Pitluck S."/>
            <person name="Chain P."/>
            <person name="Malfatti S."/>
            <person name="Shin M."/>
            <person name="Vergez L."/>
            <person name="Schmutz J."/>
            <person name="Larimer F."/>
            <person name="Land M."/>
            <person name="Kyrpides N."/>
            <person name="Ivanova N."/>
            <person name="Fredrickson J."/>
            <person name="Balkwill D."/>
            <person name="Romine M.F."/>
            <person name="Richardson P."/>
        </authorList>
    </citation>
    <scope>NUCLEOTIDE SEQUENCE [LARGE SCALE GENOMIC DNA]</scope>
    <source>
        <strain>ATCC 700278 / DSM 12444 / CCUG 56034 / CIP 105152 / NBRC 16084 / F199</strain>
    </source>
</reference>
<proteinExistence type="inferred from homology"/>